<comment type="function">
    <text evidence="1">Major role in the synthesis of nucleoside triphosphates other than ATP. The ATP gamma phosphate is transferred to the NDP beta phosphate via a ping-pong mechanism, using a phosphorylated active-site intermediate.</text>
</comment>
<comment type="catalytic activity">
    <reaction evidence="1">
        <text>a 2'-deoxyribonucleoside 5'-diphosphate + ATP = a 2'-deoxyribonucleoside 5'-triphosphate + ADP</text>
        <dbReference type="Rhea" id="RHEA:44640"/>
        <dbReference type="ChEBI" id="CHEBI:30616"/>
        <dbReference type="ChEBI" id="CHEBI:61560"/>
        <dbReference type="ChEBI" id="CHEBI:73316"/>
        <dbReference type="ChEBI" id="CHEBI:456216"/>
        <dbReference type="EC" id="2.7.4.6"/>
    </reaction>
</comment>
<comment type="catalytic activity">
    <reaction evidence="1">
        <text>a ribonucleoside 5'-diphosphate + ATP = a ribonucleoside 5'-triphosphate + ADP</text>
        <dbReference type="Rhea" id="RHEA:18113"/>
        <dbReference type="ChEBI" id="CHEBI:30616"/>
        <dbReference type="ChEBI" id="CHEBI:57930"/>
        <dbReference type="ChEBI" id="CHEBI:61557"/>
        <dbReference type="ChEBI" id="CHEBI:456216"/>
        <dbReference type="EC" id="2.7.4.6"/>
    </reaction>
</comment>
<comment type="cofactor">
    <cofactor evidence="1">
        <name>Mg(2+)</name>
        <dbReference type="ChEBI" id="CHEBI:18420"/>
    </cofactor>
</comment>
<comment type="subunit">
    <text evidence="1">Homotetramer.</text>
</comment>
<comment type="subcellular location">
    <subcellularLocation>
        <location evidence="1">Cytoplasm</location>
    </subcellularLocation>
</comment>
<comment type="similarity">
    <text evidence="1">Belongs to the NDK family.</text>
</comment>
<reference key="1">
    <citation type="journal article" date="2007" name="Proc. Natl. Acad. Sci. U.S.A.">
        <title>Deep-sea vent epsilon-proteobacterial genomes provide insights into emergence of pathogens.</title>
        <authorList>
            <person name="Nakagawa S."/>
            <person name="Takaki Y."/>
            <person name="Shimamura S."/>
            <person name="Reysenbach A.-L."/>
            <person name="Takai K."/>
            <person name="Horikoshi K."/>
        </authorList>
    </citation>
    <scope>NUCLEOTIDE SEQUENCE [LARGE SCALE GENOMIC DNA]</scope>
    <source>
        <strain>SB155-2</strain>
    </source>
</reference>
<accession>A6Q200</accession>
<name>NDK_NITSB</name>
<proteinExistence type="inferred from homology"/>
<gene>
    <name evidence="1" type="primary">ndk</name>
    <name type="ordered locus">NIS_0395</name>
</gene>
<evidence type="ECO:0000255" key="1">
    <source>
        <dbReference type="HAMAP-Rule" id="MF_00451"/>
    </source>
</evidence>
<sequence length="137" mass="15242">MERTLSIIKPDAVAKNVIGKIIDRFETNGLRIAAMKKIQLSKNDAAKFYEVHKERPFFNDLVDYMTSGPVVVMVLEGENAVAKNRELMGATDPKEAKPGTIRADFAESIEANAVHGSDSLENAQKEIAFFFAQREIL</sequence>
<feature type="chain" id="PRO_1000026261" description="Nucleoside diphosphate kinase">
    <location>
        <begin position="1"/>
        <end position="137"/>
    </location>
</feature>
<feature type="active site" description="Pros-phosphohistidine intermediate" evidence="1">
    <location>
        <position position="115"/>
    </location>
</feature>
<feature type="binding site" evidence="1">
    <location>
        <position position="9"/>
    </location>
    <ligand>
        <name>ATP</name>
        <dbReference type="ChEBI" id="CHEBI:30616"/>
    </ligand>
</feature>
<feature type="binding site" evidence="1">
    <location>
        <position position="57"/>
    </location>
    <ligand>
        <name>ATP</name>
        <dbReference type="ChEBI" id="CHEBI:30616"/>
    </ligand>
</feature>
<feature type="binding site" evidence="1">
    <location>
        <position position="85"/>
    </location>
    <ligand>
        <name>ATP</name>
        <dbReference type="ChEBI" id="CHEBI:30616"/>
    </ligand>
</feature>
<feature type="binding site" evidence="1">
    <location>
        <position position="91"/>
    </location>
    <ligand>
        <name>ATP</name>
        <dbReference type="ChEBI" id="CHEBI:30616"/>
    </ligand>
</feature>
<feature type="binding site" evidence="1">
    <location>
        <position position="102"/>
    </location>
    <ligand>
        <name>ATP</name>
        <dbReference type="ChEBI" id="CHEBI:30616"/>
    </ligand>
</feature>
<feature type="binding site" evidence="1">
    <location>
        <position position="112"/>
    </location>
    <ligand>
        <name>ATP</name>
        <dbReference type="ChEBI" id="CHEBI:30616"/>
    </ligand>
</feature>
<dbReference type="EC" id="2.7.4.6" evidence="1"/>
<dbReference type="EMBL" id="AP009178">
    <property type="protein sequence ID" value="BAF69509.1"/>
    <property type="molecule type" value="Genomic_DNA"/>
</dbReference>
<dbReference type="RefSeq" id="WP_012081772.1">
    <property type="nucleotide sequence ID" value="NC_009662.1"/>
</dbReference>
<dbReference type="SMR" id="A6Q200"/>
<dbReference type="FunCoup" id="A6Q200">
    <property type="interactions" value="423"/>
</dbReference>
<dbReference type="STRING" id="387092.NIS_0395"/>
<dbReference type="KEGG" id="nis:NIS_0395"/>
<dbReference type="eggNOG" id="COG0105">
    <property type="taxonomic scope" value="Bacteria"/>
</dbReference>
<dbReference type="HOGENOM" id="CLU_060216_8_1_7"/>
<dbReference type="InParanoid" id="A6Q200"/>
<dbReference type="OrthoDB" id="9801161at2"/>
<dbReference type="Proteomes" id="UP000001118">
    <property type="component" value="Chromosome"/>
</dbReference>
<dbReference type="GO" id="GO:0005737">
    <property type="term" value="C:cytoplasm"/>
    <property type="evidence" value="ECO:0007669"/>
    <property type="project" value="UniProtKB-SubCell"/>
</dbReference>
<dbReference type="GO" id="GO:0005524">
    <property type="term" value="F:ATP binding"/>
    <property type="evidence" value="ECO:0007669"/>
    <property type="project" value="UniProtKB-UniRule"/>
</dbReference>
<dbReference type="GO" id="GO:0046872">
    <property type="term" value="F:metal ion binding"/>
    <property type="evidence" value="ECO:0007669"/>
    <property type="project" value="UniProtKB-KW"/>
</dbReference>
<dbReference type="GO" id="GO:0004550">
    <property type="term" value="F:nucleoside diphosphate kinase activity"/>
    <property type="evidence" value="ECO:0007669"/>
    <property type="project" value="UniProtKB-UniRule"/>
</dbReference>
<dbReference type="GO" id="GO:0006241">
    <property type="term" value="P:CTP biosynthetic process"/>
    <property type="evidence" value="ECO:0007669"/>
    <property type="project" value="UniProtKB-UniRule"/>
</dbReference>
<dbReference type="GO" id="GO:0006183">
    <property type="term" value="P:GTP biosynthetic process"/>
    <property type="evidence" value="ECO:0007669"/>
    <property type="project" value="UniProtKB-UniRule"/>
</dbReference>
<dbReference type="GO" id="GO:0006228">
    <property type="term" value="P:UTP biosynthetic process"/>
    <property type="evidence" value="ECO:0007669"/>
    <property type="project" value="UniProtKB-UniRule"/>
</dbReference>
<dbReference type="CDD" id="cd04413">
    <property type="entry name" value="NDPk_I"/>
    <property type="match status" value="1"/>
</dbReference>
<dbReference type="FunFam" id="3.30.70.141:FF:000001">
    <property type="entry name" value="Nucleoside diphosphate kinase"/>
    <property type="match status" value="1"/>
</dbReference>
<dbReference type="Gene3D" id="3.30.70.141">
    <property type="entry name" value="Nucleoside diphosphate kinase-like domain"/>
    <property type="match status" value="1"/>
</dbReference>
<dbReference type="HAMAP" id="MF_00451">
    <property type="entry name" value="NDP_kinase"/>
    <property type="match status" value="1"/>
</dbReference>
<dbReference type="InterPro" id="IPR034907">
    <property type="entry name" value="NDK-like_dom"/>
</dbReference>
<dbReference type="InterPro" id="IPR036850">
    <property type="entry name" value="NDK-like_dom_sf"/>
</dbReference>
<dbReference type="InterPro" id="IPR001564">
    <property type="entry name" value="Nucleoside_diP_kinase"/>
</dbReference>
<dbReference type="InterPro" id="IPR023005">
    <property type="entry name" value="Nucleoside_diP_kinase_AS"/>
</dbReference>
<dbReference type="NCBIfam" id="NF001908">
    <property type="entry name" value="PRK00668.1"/>
    <property type="match status" value="1"/>
</dbReference>
<dbReference type="PANTHER" id="PTHR11349">
    <property type="entry name" value="NUCLEOSIDE DIPHOSPHATE KINASE"/>
    <property type="match status" value="1"/>
</dbReference>
<dbReference type="Pfam" id="PF00334">
    <property type="entry name" value="NDK"/>
    <property type="match status" value="1"/>
</dbReference>
<dbReference type="PRINTS" id="PR01243">
    <property type="entry name" value="NUCDPKINASE"/>
</dbReference>
<dbReference type="SMART" id="SM00562">
    <property type="entry name" value="NDK"/>
    <property type="match status" value="1"/>
</dbReference>
<dbReference type="SUPFAM" id="SSF54919">
    <property type="entry name" value="Nucleoside diphosphate kinase, NDK"/>
    <property type="match status" value="1"/>
</dbReference>
<dbReference type="PROSITE" id="PS00469">
    <property type="entry name" value="NDPK"/>
    <property type="match status" value="1"/>
</dbReference>
<dbReference type="PROSITE" id="PS51374">
    <property type="entry name" value="NDPK_LIKE"/>
    <property type="match status" value="1"/>
</dbReference>
<protein>
    <recommendedName>
        <fullName evidence="1">Nucleoside diphosphate kinase</fullName>
        <shortName evidence="1">NDK</shortName>
        <shortName evidence="1">NDP kinase</shortName>
        <ecNumber evidence="1">2.7.4.6</ecNumber>
    </recommendedName>
    <alternativeName>
        <fullName evidence="1">Nucleoside-2-P kinase</fullName>
    </alternativeName>
</protein>
<organism>
    <name type="scientific">Nitratiruptor sp. (strain SB155-2)</name>
    <dbReference type="NCBI Taxonomy" id="387092"/>
    <lineage>
        <taxon>Bacteria</taxon>
        <taxon>Pseudomonadati</taxon>
        <taxon>Campylobacterota</taxon>
        <taxon>Epsilonproteobacteria</taxon>
        <taxon>Nautiliales</taxon>
        <taxon>Nitratiruptoraceae</taxon>
        <taxon>Nitratiruptor</taxon>
    </lineage>
</organism>
<keyword id="KW-0067">ATP-binding</keyword>
<keyword id="KW-0963">Cytoplasm</keyword>
<keyword id="KW-0418">Kinase</keyword>
<keyword id="KW-0460">Magnesium</keyword>
<keyword id="KW-0479">Metal-binding</keyword>
<keyword id="KW-0546">Nucleotide metabolism</keyword>
<keyword id="KW-0547">Nucleotide-binding</keyword>
<keyword id="KW-0597">Phosphoprotein</keyword>
<keyword id="KW-1185">Reference proteome</keyword>
<keyword id="KW-0808">Transferase</keyword>